<organism>
    <name type="scientific">Lactobacillus delbrueckii subsp. bulgaricus (strain ATCC BAA-365 / Lb-18)</name>
    <dbReference type="NCBI Taxonomy" id="321956"/>
    <lineage>
        <taxon>Bacteria</taxon>
        <taxon>Bacillati</taxon>
        <taxon>Bacillota</taxon>
        <taxon>Bacilli</taxon>
        <taxon>Lactobacillales</taxon>
        <taxon>Lactobacillaceae</taxon>
        <taxon>Lactobacillus</taxon>
    </lineage>
</organism>
<sequence>MANKKIRVRYAPSPTGHLHIGNARTALFNYLFARHNKGTLVLRIEDTDTARNVEGGAESQIENLHWLGIDWDEGPDIGGDYGPYKQSERKDIYQKYIDQLLEEGKAYYSFKTEEELEAQREEQRAMGIAPHYVYEYEGMTTDEIKQAQDEARAKGLKPVVRIHIPEGVTYEWDDIVKGHLSFESDTIGGDFVIQKRDGMPTYNFAVVIDDHLMEISHVLRGDDHISNTPKQLCVYEALGWEAPVFGHMTLIINSATGKKLSKRDESVLQFIEQYRELGFLPEAMFNFITLLGWSPVGESEIFSKREFIKQFDPARLSKSPAAFDQKKLDWVNNQYMKTADRDELLDLALHNLQEAGLVEANPAPGKMEWVRQLVNMYANQMSYTKQIVDLSKIFFTEAKYLTDEEVEEIKKDEARPAIEEFKKQLDKLDNFTAKKIMDAIMATRRETGIKGRKLFMPIRIATTRSMVGPGIGEAMELMGKDTVMKHLDLTLKQLSEAGIE</sequence>
<comment type="function">
    <text evidence="1">Catalyzes the attachment of glutamate to tRNA(Glu) in a two-step reaction: glutamate is first activated by ATP to form Glu-AMP and then transferred to the acceptor end of tRNA(Glu).</text>
</comment>
<comment type="catalytic activity">
    <reaction evidence="1">
        <text>tRNA(Glu) + L-glutamate + ATP = L-glutamyl-tRNA(Glu) + AMP + diphosphate</text>
        <dbReference type="Rhea" id="RHEA:23540"/>
        <dbReference type="Rhea" id="RHEA-COMP:9663"/>
        <dbReference type="Rhea" id="RHEA-COMP:9680"/>
        <dbReference type="ChEBI" id="CHEBI:29985"/>
        <dbReference type="ChEBI" id="CHEBI:30616"/>
        <dbReference type="ChEBI" id="CHEBI:33019"/>
        <dbReference type="ChEBI" id="CHEBI:78442"/>
        <dbReference type="ChEBI" id="CHEBI:78520"/>
        <dbReference type="ChEBI" id="CHEBI:456215"/>
        <dbReference type="EC" id="6.1.1.17"/>
    </reaction>
</comment>
<comment type="subunit">
    <text evidence="1">Monomer.</text>
</comment>
<comment type="subcellular location">
    <subcellularLocation>
        <location evidence="1">Cytoplasm</location>
    </subcellularLocation>
</comment>
<comment type="similarity">
    <text evidence="1">Belongs to the class-I aminoacyl-tRNA synthetase family. Glutamate--tRNA ligase type 1 subfamily.</text>
</comment>
<comment type="sequence caution" evidence="2">
    <conflict type="erroneous initiation">
        <sequence resource="EMBL-CDS" id="ABJ59049"/>
    </conflict>
</comment>
<dbReference type="EC" id="6.1.1.17" evidence="1"/>
<dbReference type="EMBL" id="CP000412">
    <property type="protein sequence ID" value="ABJ59049.1"/>
    <property type="status" value="ALT_INIT"/>
    <property type="molecule type" value="Genomic_DNA"/>
</dbReference>
<dbReference type="RefSeq" id="WP_035170146.1">
    <property type="nucleotide sequence ID" value="NC_008529.1"/>
</dbReference>
<dbReference type="SMR" id="Q048S3"/>
<dbReference type="KEGG" id="lbu:LBUL_1560"/>
<dbReference type="HOGENOM" id="CLU_015768_6_1_9"/>
<dbReference type="BioCyc" id="LDEL321956:LBUL_RS07360-MONOMER"/>
<dbReference type="GO" id="GO:0005829">
    <property type="term" value="C:cytosol"/>
    <property type="evidence" value="ECO:0007669"/>
    <property type="project" value="TreeGrafter"/>
</dbReference>
<dbReference type="GO" id="GO:0005524">
    <property type="term" value="F:ATP binding"/>
    <property type="evidence" value="ECO:0007669"/>
    <property type="project" value="UniProtKB-UniRule"/>
</dbReference>
<dbReference type="GO" id="GO:0004818">
    <property type="term" value="F:glutamate-tRNA ligase activity"/>
    <property type="evidence" value="ECO:0007669"/>
    <property type="project" value="UniProtKB-UniRule"/>
</dbReference>
<dbReference type="GO" id="GO:0000049">
    <property type="term" value="F:tRNA binding"/>
    <property type="evidence" value="ECO:0007669"/>
    <property type="project" value="InterPro"/>
</dbReference>
<dbReference type="GO" id="GO:0008270">
    <property type="term" value="F:zinc ion binding"/>
    <property type="evidence" value="ECO:0007669"/>
    <property type="project" value="InterPro"/>
</dbReference>
<dbReference type="GO" id="GO:0006424">
    <property type="term" value="P:glutamyl-tRNA aminoacylation"/>
    <property type="evidence" value="ECO:0007669"/>
    <property type="project" value="UniProtKB-UniRule"/>
</dbReference>
<dbReference type="CDD" id="cd00808">
    <property type="entry name" value="GluRS_core"/>
    <property type="match status" value="1"/>
</dbReference>
<dbReference type="FunFam" id="3.40.50.620:FF:000007">
    <property type="entry name" value="Glutamate--tRNA ligase"/>
    <property type="match status" value="1"/>
</dbReference>
<dbReference type="Gene3D" id="1.10.10.350">
    <property type="match status" value="1"/>
</dbReference>
<dbReference type="Gene3D" id="3.40.50.620">
    <property type="entry name" value="HUPs"/>
    <property type="match status" value="1"/>
</dbReference>
<dbReference type="HAMAP" id="MF_00022">
    <property type="entry name" value="Glu_tRNA_synth_type1"/>
    <property type="match status" value="1"/>
</dbReference>
<dbReference type="InterPro" id="IPR045462">
    <property type="entry name" value="aa-tRNA-synth_I_cd-bd"/>
</dbReference>
<dbReference type="InterPro" id="IPR020751">
    <property type="entry name" value="aa-tRNA-synth_I_codon-bd_sub2"/>
</dbReference>
<dbReference type="InterPro" id="IPR001412">
    <property type="entry name" value="aa-tRNA-synth_I_CS"/>
</dbReference>
<dbReference type="InterPro" id="IPR008925">
    <property type="entry name" value="aa_tRNA-synth_I_cd-bd_sf"/>
</dbReference>
<dbReference type="InterPro" id="IPR004527">
    <property type="entry name" value="Glu-tRNA-ligase_bac/mito"/>
</dbReference>
<dbReference type="InterPro" id="IPR000924">
    <property type="entry name" value="Glu/Gln-tRNA-synth"/>
</dbReference>
<dbReference type="InterPro" id="IPR020058">
    <property type="entry name" value="Glu/Gln-tRNA-synth_Ib_cat-dom"/>
</dbReference>
<dbReference type="InterPro" id="IPR049940">
    <property type="entry name" value="GluQ/Sye"/>
</dbReference>
<dbReference type="InterPro" id="IPR033910">
    <property type="entry name" value="GluRS_core"/>
</dbReference>
<dbReference type="InterPro" id="IPR014729">
    <property type="entry name" value="Rossmann-like_a/b/a_fold"/>
</dbReference>
<dbReference type="NCBIfam" id="TIGR00464">
    <property type="entry name" value="gltX_bact"/>
    <property type="match status" value="1"/>
</dbReference>
<dbReference type="PANTHER" id="PTHR43311">
    <property type="entry name" value="GLUTAMATE--TRNA LIGASE"/>
    <property type="match status" value="1"/>
</dbReference>
<dbReference type="PANTHER" id="PTHR43311:SF2">
    <property type="entry name" value="GLUTAMATE--TRNA LIGASE, MITOCHONDRIAL-RELATED"/>
    <property type="match status" value="1"/>
</dbReference>
<dbReference type="Pfam" id="PF19269">
    <property type="entry name" value="Anticodon_2"/>
    <property type="match status" value="1"/>
</dbReference>
<dbReference type="Pfam" id="PF00749">
    <property type="entry name" value="tRNA-synt_1c"/>
    <property type="match status" value="1"/>
</dbReference>
<dbReference type="PRINTS" id="PR00987">
    <property type="entry name" value="TRNASYNTHGLU"/>
</dbReference>
<dbReference type="SUPFAM" id="SSF48163">
    <property type="entry name" value="An anticodon-binding domain of class I aminoacyl-tRNA synthetases"/>
    <property type="match status" value="1"/>
</dbReference>
<dbReference type="SUPFAM" id="SSF52374">
    <property type="entry name" value="Nucleotidylyl transferase"/>
    <property type="match status" value="1"/>
</dbReference>
<dbReference type="PROSITE" id="PS00178">
    <property type="entry name" value="AA_TRNA_LIGASE_I"/>
    <property type="match status" value="1"/>
</dbReference>
<proteinExistence type="inferred from homology"/>
<evidence type="ECO:0000255" key="1">
    <source>
        <dbReference type="HAMAP-Rule" id="MF_00022"/>
    </source>
</evidence>
<evidence type="ECO:0000305" key="2"/>
<reference key="1">
    <citation type="journal article" date="2006" name="Proc. Natl. Acad. Sci. U.S.A.">
        <title>Comparative genomics of the lactic acid bacteria.</title>
        <authorList>
            <person name="Makarova K.S."/>
            <person name="Slesarev A."/>
            <person name="Wolf Y.I."/>
            <person name="Sorokin A."/>
            <person name="Mirkin B."/>
            <person name="Koonin E.V."/>
            <person name="Pavlov A."/>
            <person name="Pavlova N."/>
            <person name="Karamychev V."/>
            <person name="Polouchine N."/>
            <person name="Shakhova V."/>
            <person name="Grigoriev I."/>
            <person name="Lou Y."/>
            <person name="Rohksar D."/>
            <person name="Lucas S."/>
            <person name="Huang K."/>
            <person name="Goodstein D.M."/>
            <person name="Hawkins T."/>
            <person name="Plengvidhya V."/>
            <person name="Welker D."/>
            <person name="Hughes J."/>
            <person name="Goh Y."/>
            <person name="Benson A."/>
            <person name="Baldwin K."/>
            <person name="Lee J.-H."/>
            <person name="Diaz-Muniz I."/>
            <person name="Dosti B."/>
            <person name="Smeianov V."/>
            <person name="Wechter W."/>
            <person name="Barabote R."/>
            <person name="Lorca G."/>
            <person name="Altermann E."/>
            <person name="Barrangou R."/>
            <person name="Ganesan B."/>
            <person name="Xie Y."/>
            <person name="Rawsthorne H."/>
            <person name="Tamir D."/>
            <person name="Parker C."/>
            <person name="Breidt F."/>
            <person name="Broadbent J.R."/>
            <person name="Hutkins R."/>
            <person name="O'Sullivan D."/>
            <person name="Steele J."/>
            <person name="Unlu G."/>
            <person name="Saier M.H. Jr."/>
            <person name="Klaenhammer T."/>
            <person name="Richardson P."/>
            <person name="Kozyavkin S."/>
            <person name="Weimer B.C."/>
            <person name="Mills D.A."/>
        </authorList>
    </citation>
    <scope>NUCLEOTIDE SEQUENCE [LARGE SCALE GENOMIC DNA]</scope>
    <source>
        <strain>ATCC BAA-365 / Lb-18</strain>
    </source>
</reference>
<keyword id="KW-0030">Aminoacyl-tRNA synthetase</keyword>
<keyword id="KW-0067">ATP-binding</keyword>
<keyword id="KW-0963">Cytoplasm</keyword>
<keyword id="KW-0436">Ligase</keyword>
<keyword id="KW-0547">Nucleotide-binding</keyword>
<keyword id="KW-0648">Protein biosynthesis</keyword>
<name>SYE_LACDB</name>
<protein>
    <recommendedName>
        <fullName evidence="1">Glutamate--tRNA ligase</fullName>
        <ecNumber evidence="1">6.1.1.17</ecNumber>
    </recommendedName>
    <alternativeName>
        <fullName evidence="1">Glutamyl-tRNA synthetase</fullName>
        <shortName evidence="1">GluRS</shortName>
    </alternativeName>
</protein>
<gene>
    <name evidence="1" type="primary">gltX</name>
    <name type="ordered locus">LBUL_1560</name>
</gene>
<feature type="chain" id="PRO_0000367697" description="Glutamate--tRNA ligase">
    <location>
        <begin position="1"/>
        <end position="500"/>
    </location>
</feature>
<feature type="short sequence motif" description="'HIGH' region" evidence="1">
    <location>
        <begin position="12"/>
        <end position="22"/>
    </location>
</feature>
<feature type="short sequence motif" description="'KMSKS' region" evidence="1">
    <location>
        <begin position="259"/>
        <end position="263"/>
    </location>
</feature>
<feature type="binding site" evidence="1">
    <location>
        <position position="262"/>
    </location>
    <ligand>
        <name>ATP</name>
        <dbReference type="ChEBI" id="CHEBI:30616"/>
    </ligand>
</feature>
<accession>Q048S3</accession>